<organism>
    <name type="scientific">Phyllomedusa distincta</name>
    <name type="common">Monkey frog</name>
    <dbReference type="NCBI Taxonomy" id="164618"/>
    <lineage>
        <taxon>Eukaryota</taxon>
        <taxon>Metazoa</taxon>
        <taxon>Chordata</taxon>
        <taxon>Craniata</taxon>
        <taxon>Vertebrata</taxon>
        <taxon>Euteleostomi</taxon>
        <taxon>Amphibia</taxon>
        <taxon>Batrachia</taxon>
        <taxon>Anura</taxon>
        <taxon>Neobatrachia</taxon>
        <taxon>Hyloidea</taxon>
        <taxon>Hylidae</taxon>
        <taxon>Phyllomedusinae</taxon>
        <taxon>Phyllomedusa</taxon>
    </lineage>
</organism>
<comment type="function">
    <text evidence="2 3 4 5">Has antibacterial activity against the Gram-positive bacteria S.aureus and E.faecalis, and the Gram-negative bacteria P.aeruginosa and E.coli. Has antiprotozoal activity against T.cruzi. Has antifungal activity against the yeasts C.tropicalis (MIC=10.1 uM), C.guilliermondii (MIC=20.3 uM), C.albicans (MIC=20.3 uM) and C.albicans ATCC 1023 (MIC=10.1 uM). Decreases viability of murine peritoneal cells. Fuses to, and disrupts liposomes.</text>
</comment>
<comment type="subcellular location">
    <subcellularLocation>
        <location evidence="2">Secreted</location>
    </subcellularLocation>
</comment>
<comment type="tissue specificity">
    <text evidence="2">Expressed by the skin glands.</text>
</comment>
<comment type="mass spectrometry" mass="3154.0" method="Electrospray" evidence="2"/>
<comment type="similarity">
    <text evidence="1">Belongs to the frog skin active peptide (FSAP) family. Dermaseptin subfamily.</text>
</comment>
<comment type="online information" name="The antimicrobial peptide database">
    <link uri="https://wangapd3.com/database/query_output.php?ID=0966"/>
</comment>
<feature type="peptide" id="PRO_0000044730" description="Dermaseptin-DI1" evidence="2">
    <location>
        <begin position="1"/>
        <end position="33"/>
    </location>
</feature>
<feature type="modified residue" description="Valine amide" evidence="6">
    <location>
        <position position="33"/>
    </location>
</feature>
<feature type="strand" evidence="9">
    <location>
        <begin position="5"/>
        <end position="7"/>
    </location>
</feature>
<feature type="helix" evidence="9">
    <location>
        <begin position="8"/>
        <end position="32"/>
    </location>
</feature>
<evidence type="ECO:0000255" key="1"/>
<evidence type="ECO:0000269" key="2">
    <source>
    </source>
</evidence>
<evidence type="ECO:0000269" key="3">
    <source>
    </source>
</evidence>
<evidence type="ECO:0000269" key="4">
    <source>
    </source>
</evidence>
<evidence type="ECO:0000269" key="5">
    <source>
    </source>
</evidence>
<evidence type="ECO:0000269" key="6">
    <source>
    </source>
</evidence>
<evidence type="ECO:0000303" key="7">
    <source>
    </source>
</evidence>
<evidence type="ECO:0000303" key="8">
    <source>
    </source>
</evidence>
<evidence type="ECO:0007829" key="9">
    <source>
        <dbReference type="PDB" id="2JX6"/>
    </source>
</evidence>
<protein>
    <recommendedName>
        <fullName evidence="8">Dermaseptin-DI1</fullName>
        <shortName evidence="8">DRS-DI1</shortName>
    </recommendedName>
    <alternativeName>
        <fullName evidence="7">Dermadistinctin-K</fullName>
        <shortName evidence="7">DD-K</shortName>
    </alternativeName>
</protein>
<accession>P83638</accession>
<name>DRS1_PHYDS</name>
<sequence length="33" mass="3153">GLWSKIKAAGKEAAKAAAKAAGKAALNAVSEAV</sequence>
<dbReference type="PDB" id="2JX6">
    <property type="method" value="NMR"/>
    <property type="chains" value="A=1-33"/>
</dbReference>
<dbReference type="PDB" id="2K9B">
    <property type="method" value="NMR"/>
    <property type="chains" value="A=1-33"/>
</dbReference>
<dbReference type="PDBsum" id="2JX6"/>
<dbReference type="PDBsum" id="2K9B"/>
<dbReference type="SMR" id="P83638"/>
<dbReference type="EvolutionaryTrace" id="P83638"/>
<dbReference type="GO" id="GO:0005576">
    <property type="term" value="C:extracellular region"/>
    <property type="evidence" value="ECO:0007669"/>
    <property type="project" value="UniProtKB-SubCell"/>
</dbReference>
<dbReference type="GO" id="GO:0042742">
    <property type="term" value="P:defense response to bacterium"/>
    <property type="evidence" value="ECO:0007669"/>
    <property type="project" value="UniProtKB-KW"/>
</dbReference>
<dbReference type="InterPro" id="IPR022731">
    <property type="entry name" value="Dermaseptin_dom"/>
</dbReference>
<dbReference type="Pfam" id="PF12121">
    <property type="entry name" value="DD_K"/>
    <property type="match status" value="1"/>
</dbReference>
<keyword id="KW-0002">3D-structure</keyword>
<keyword id="KW-0027">Amidation</keyword>
<keyword id="KW-0878">Amphibian defense peptide</keyword>
<keyword id="KW-0044">Antibiotic</keyword>
<keyword id="KW-0929">Antimicrobial</keyword>
<keyword id="KW-0903">Direct protein sequencing</keyword>
<keyword id="KW-0964">Secreted</keyword>
<reference key="1">
    <citation type="journal article" date="1999" name="Peptides">
        <title>Antimicrobial peptides from the Brazilian frog Phyllomedusa distincta.</title>
        <authorList>
            <person name="Batista C.V.F."/>
            <person name="da Silva L.R."/>
            <person name="Sebben A."/>
            <person name="Scaloni A."/>
            <person name="Ferrara L."/>
            <person name="Paiva G.R."/>
            <person name="Olamendi-Portugal T."/>
            <person name="Possani L.D."/>
            <person name="Bloch C. Jr."/>
        </authorList>
    </citation>
    <scope>PROTEIN SEQUENCE</scope>
    <scope>FUNCTION</scope>
    <scope>SUBCELLULAR LOCATION</scope>
    <scope>TISSUE SPECIFICITY</scope>
    <scope>MASS SPECTROMETRY</scope>
    <scope>CIRCULAR DICHROISM ANALYSIS</scope>
    <scope>SYNTHESIS</scope>
    <source>
        <tissue>Skin secretion</tissue>
    </source>
</reference>
<reference key="2">
    <citation type="journal article" date="2002" name="J. Biol. Chem.">
        <title>Dermaseptins from Phyllomedusa oreades and Phyllomedusa distincta. Anti-Trypanosoma cruzi activity without cytotoxicity to mammalian cells.</title>
        <authorList>
            <person name="Brand G.D."/>
            <person name="Leite J.R.S.A."/>
            <person name="Silva L.P."/>
            <person name="Albuquerque S."/>
            <person name="Prates M.V."/>
            <person name="Azevedo R.B."/>
            <person name="Carregaro V."/>
            <person name="Silva J.S."/>
            <person name="Sa V.C.L."/>
            <person name="Brandao R.A."/>
            <person name="Bloch C. Jr."/>
        </authorList>
    </citation>
    <scope>SYNTHESIS</scope>
    <scope>FUNCTION AS AN ANTIPROTOZOAN PROTEIN</scope>
</reference>
<reference key="3">
    <citation type="journal article" date="2008" name="Comp. Biochem. Physiol.">
        <title>Dermaseptins from Phyllomedusa oreades and Phyllomedusa distincta: liposomes fusion and/or lysis investigated by fluorescence and atomic force microscopy.</title>
        <authorList>
            <person name="Silva L.P."/>
            <person name="Leite J.R.S.A."/>
            <person name="Brand G.D."/>
            <person name="Regis W.B."/>
            <person name="Tedesco A.C."/>
            <person name="Azevedo R.B."/>
            <person name="Freitas S.M."/>
            <person name="Bloch C. Jr."/>
        </authorList>
    </citation>
    <scope>FUNCTION</scope>
    <scope>SYNTHESIS</scope>
</reference>
<reference key="4">
    <citation type="journal article" date="2008" name="Comp. Biochem. Physiol.">
        <title>Dermaseptins from Phyllomedusa oreades and Phyllomedusa distincta: Secondary structure, antimicrobial activity, and mammalian cell toxicity.</title>
        <authorList>
            <person name="Leite J.R.S.A."/>
            <person name="Brand G.D."/>
            <person name="Silva L.P."/>
            <person name="Kuckelhaus S.A.S."/>
            <person name="Bento W.R.C."/>
            <person name="Araujo A.L.T."/>
            <person name="Martins G.R."/>
            <person name="Lazzari A.M."/>
            <person name="Bloch C. Jr."/>
        </authorList>
    </citation>
    <scope>FUNCTION</scope>
    <scope>SYNTHESIS</scope>
</reference>
<reference key="5">
    <citation type="journal article" date="2008" name="Peptides">
        <title>A consistent nomenclature of antimicrobial peptides isolated from frogs of the subfamily Phyllomedusinae.</title>
        <authorList>
            <person name="Amiche M."/>
            <person name="Ladram A."/>
            <person name="Nicolas P."/>
        </authorList>
    </citation>
    <scope>NOMENCLATURE</scope>
</reference>
<reference key="6">
    <citation type="journal article" date="2009" name="Biophys. J.">
        <title>Structure and membrane interactions of the antibiotic peptide dermadistinctin K by multidimensional solution and oriented 15N and 31P solid-state NMR spectroscopy.</title>
        <authorList>
            <person name="Verly R.M."/>
            <person name="de Moraes C.M."/>
            <person name="Resende J.M."/>
            <person name="Aisenbrey C."/>
            <person name="Bemquerer M.P."/>
            <person name="Pilo-Veloso D."/>
            <person name="Valente A.P."/>
            <person name="Almeida F.C."/>
            <person name="Bechinger B."/>
        </authorList>
    </citation>
    <scope>STRUCTURE BY NMR</scope>
    <scope>AMIDATION AT VAL-33</scope>
</reference>
<proteinExistence type="evidence at protein level"/>